<evidence type="ECO:0000255" key="1">
    <source>
        <dbReference type="HAMAP-Rule" id="MF_01803"/>
    </source>
</evidence>
<gene>
    <name evidence="1" type="primary">mukF</name>
    <name type="ordered locus">APP7_0623</name>
</gene>
<accession>B3GXC3</accession>
<feature type="chain" id="PRO_1000187496" description="Chromosome partition protein MukF">
    <location>
        <begin position="1"/>
        <end position="443"/>
    </location>
</feature>
<feature type="region of interest" description="Leucine-zipper">
    <location>
        <begin position="209"/>
        <end position="237"/>
    </location>
</feature>
<dbReference type="EMBL" id="CP001091">
    <property type="protein sequence ID" value="ACE61275.1"/>
    <property type="molecule type" value="Genomic_DNA"/>
</dbReference>
<dbReference type="RefSeq" id="WP_005600699.1">
    <property type="nucleotide sequence ID" value="NC_010939.1"/>
</dbReference>
<dbReference type="SMR" id="B3GXC3"/>
<dbReference type="KEGG" id="apa:APP7_0623"/>
<dbReference type="HOGENOM" id="CLU_049853_0_0_6"/>
<dbReference type="Proteomes" id="UP000001226">
    <property type="component" value="Chromosome"/>
</dbReference>
<dbReference type="GO" id="GO:0005737">
    <property type="term" value="C:cytoplasm"/>
    <property type="evidence" value="ECO:0007669"/>
    <property type="project" value="UniProtKB-UniRule"/>
</dbReference>
<dbReference type="GO" id="GO:0009295">
    <property type="term" value="C:nucleoid"/>
    <property type="evidence" value="ECO:0007669"/>
    <property type="project" value="UniProtKB-SubCell"/>
</dbReference>
<dbReference type="GO" id="GO:0005509">
    <property type="term" value="F:calcium ion binding"/>
    <property type="evidence" value="ECO:0007669"/>
    <property type="project" value="UniProtKB-UniRule"/>
</dbReference>
<dbReference type="GO" id="GO:0051301">
    <property type="term" value="P:cell division"/>
    <property type="evidence" value="ECO:0007669"/>
    <property type="project" value="UniProtKB-KW"/>
</dbReference>
<dbReference type="GO" id="GO:0030261">
    <property type="term" value="P:chromosome condensation"/>
    <property type="evidence" value="ECO:0007669"/>
    <property type="project" value="UniProtKB-KW"/>
</dbReference>
<dbReference type="GO" id="GO:0007059">
    <property type="term" value="P:chromosome segregation"/>
    <property type="evidence" value="ECO:0007669"/>
    <property type="project" value="UniProtKB-UniRule"/>
</dbReference>
<dbReference type="GO" id="GO:0006260">
    <property type="term" value="P:DNA replication"/>
    <property type="evidence" value="ECO:0007669"/>
    <property type="project" value="UniProtKB-UniRule"/>
</dbReference>
<dbReference type="CDD" id="cd16337">
    <property type="entry name" value="MukF_C"/>
    <property type="match status" value="1"/>
</dbReference>
<dbReference type="CDD" id="cd16335">
    <property type="entry name" value="MukF_N"/>
    <property type="match status" value="1"/>
</dbReference>
<dbReference type="Gene3D" id="1.20.58.590">
    <property type="entry name" value="Chromosome partition protein MukF, middle domain"/>
    <property type="match status" value="1"/>
</dbReference>
<dbReference type="Gene3D" id="1.10.225.40">
    <property type="entry name" value="MukF, C-terminal domain"/>
    <property type="match status" value="1"/>
</dbReference>
<dbReference type="Gene3D" id="1.10.10.10">
    <property type="entry name" value="Winged helix-like DNA-binding domain superfamily/Winged helix DNA-binding domain"/>
    <property type="match status" value="1"/>
</dbReference>
<dbReference type="HAMAP" id="MF_01803">
    <property type="entry name" value="MukF"/>
    <property type="match status" value="1"/>
</dbReference>
<dbReference type="InterPro" id="IPR005582">
    <property type="entry name" value="Chromosome_partition_MukF"/>
</dbReference>
<dbReference type="InterPro" id="IPR033441">
    <property type="entry name" value="MukF_C"/>
</dbReference>
<dbReference type="InterPro" id="IPR038198">
    <property type="entry name" value="MukF_C_sf"/>
</dbReference>
<dbReference type="InterPro" id="IPR033440">
    <property type="entry name" value="MukF_M"/>
</dbReference>
<dbReference type="InterPro" id="IPR036141">
    <property type="entry name" value="MukF_M_sp"/>
</dbReference>
<dbReference type="InterPro" id="IPR033439">
    <property type="entry name" value="MukF_WHTH"/>
</dbReference>
<dbReference type="InterPro" id="IPR036388">
    <property type="entry name" value="WH-like_DNA-bd_sf"/>
</dbReference>
<dbReference type="InterPro" id="IPR036390">
    <property type="entry name" value="WH_DNA-bd_sf"/>
</dbReference>
<dbReference type="NCBIfam" id="NF003615">
    <property type="entry name" value="PRK05260.1"/>
    <property type="match status" value="1"/>
</dbReference>
<dbReference type="Pfam" id="PF03882">
    <property type="entry name" value="KicB"/>
    <property type="match status" value="1"/>
</dbReference>
<dbReference type="Pfam" id="PF17193">
    <property type="entry name" value="MukF_C"/>
    <property type="match status" value="1"/>
</dbReference>
<dbReference type="Pfam" id="PF17192">
    <property type="entry name" value="MukF_M"/>
    <property type="match status" value="1"/>
</dbReference>
<dbReference type="PIRSF" id="PIRSF018282">
    <property type="entry name" value="MukF"/>
    <property type="match status" value="1"/>
</dbReference>
<dbReference type="SUPFAM" id="SSF140570">
    <property type="entry name" value="MukF C-terminal domain-like"/>
    <property type="match status" value="1"/>
</dbReference>
<dbReference type="SUPFAM" id="SSF46785">
    <property type="entry name" value="Winged helix' DNA-binding domain"/>
    <property type="match status" value="1"/>
</dbReference>
<comment type="function">
    <text evidence="1">Involved in chromosome condensation, segregation and cell cycle progression. May participate in facilitating chromosome segregation by condensation DNA from both sides of a centrally located replisome during cell division. Not required for mini-F plasmid partitioning. Probably acts via its interaction with MukB and MukE. Overexpression results in anucleate cells. It has a calcium binding activity.</text>
</comment>
<comment type="subunit">
    <text evidence="1">Interacts, and probably forms a ternary complex, with MukE and MukB via its C-terminal region. The complex formation is stimulated by calcium or magnesium. It is required for an interaction between MukE and MukB.</text>
</comment>
<comment type="subcellular location">
    <subcellularLocation>
        <location evidence="1">Cytoplasm</location>
        <location evidence="1">Nucleoid</location>
    </subcellularLocation>
    <text evidence="1">Restricted to the nucleoid region.</text>
</comment>
<comment type="similarity">
    <text evidence="1">Belongs to the MukF family.</text>
</comment>
<reference key="1">
    <citation type="submission" date="2008-06" db="EMBL/GenBank/DDBJ databases">
        <title>Genome and proteome analysis of A. pleuropneumoniae serotype 7.</title>
        <authorList>
            <person name="Linke B."/>
            <person name="Buettner F."/>
            <person name="Martinez-Arias R."/>
            <person name="Goesmann A."/>
            <person name="Baltes N."/>
            <person name="Tegetmeyer H."/>
            <person name="Singh M."/>
            <person name="Gerlach G.F."/>
        </authorList>
    </citation>
    <scope>NUCLEOTIDE SEQUENCE [LARGE SCALE GENOMIC DNA]</scope>
    <source>
        <strain>AP76</strain>
    </source>
</reference>
<proteinExistence type="inferred from homology"/>
<sequence length="443" mass="50816">MQNELAQTIPELINWTKEREFSLSLSSDRLAFLLAISIYNNEQTDGELLESDLIDLFRYVSEVFDQSEATLTQRANNAINDLVKQRFLNRFSSEFTEGLAIYRITPLGVGVADYYVRQREFSTLRLSIQLSIVADEIQRASSAAEEGGDERFWRNNVFAPLKYSVAEIFDSIDLSQRMMDENQHQIRERIAELLSQNWHEAILSCEQLLDETSGNLRELQDTLNAAGDKLQAQLLRIQSCLIGRDDLDFVDQLIVNLQNKLDRIISWGQQAIDLWIGYDRHVHKFIRTAIDMDKNRVFGQRLRQSIQDYFNAPWLLYTAKAESLLDLRDDETMLNETEAVGELPSELEYESLSDVQEQIISVMQAHLAPFRAEGKPIDLGAVLREQLALYPQSRHFDVARIIVDQAVKLGMASLDSQAVYPEWQAINDNGAEVQANVIDQYNK</sequence>
<protein>
    <recommendedName>
        <fullName evidence="1">Chromosome partition protein MukF</fullName>
    </recommendedName>
</protein>
<organism>
    <name type="scientific">Actinobacillus pleuropneumoniae serotype 7 (strain AP76)</name>
    <dbReference type="NCBI Taxonomy" id="537457"/>
    <lineage>
        <taxon>Bacteria</taxon>
        <taxon>Pseudomonadati</taxon>
        <taxon>Pseudomonadota</taxon>
        <taxon>Gammaproteobacteria</taxon>
        <taxon>Pasteurellales</taxon>
        <taxon>Pasteurellaceae</taxon>
        <taxon>Actinobacillus</taxon>
    </lineage>
</organism>
<name>MUKF_ACTP7</name>
<keyword id="KW-0106">Calcium</keyword>
<keyword id="KW-0131">Cell cycle</keyword>
<keyword id="KW-0132">Cell division</keyword>
<keyword id="KW-0159">Chromosome partition</keyword>
<keyword id="KW-0963">Cytoplasm</keyword>
<keyword id="KW-0226">DNA condensation</keyword>